<evidence type="ECO:0000250" key="1">
    <source>
        <dbReference type="UniProtKB" id="Q9CVB6"/>
    </source>
</evidence>
<evidence type="ECO:0000269" key="2">
    <source>
    </source>
</evidence>
<evidence type="ECO:0000269" key="3">
    <source>
    </source>
</evidence>
<evidence type="ECO:0000269" key="4">
    <source>
    </source>
</evidence>
<evidence type="ECO:0000269" key="5">
    <source>
    </source>
</evidence>
<evidence type="ECO:0000305" key="6"/>
<evidence type="ECO:0007744" key="7">
    <source>
    </source>
</evidence>
<name>ARPC2_HUMAN</name>
<comment type="function">
    <text evidence="3 5">Actin-binding component of the Arp2/3 complex, a multiprotein complex that mediates actin polymerization upon stimulation by nucleation-promoting factor (NPF) (PubMed:9230079). The Arp2/3 complex mediates the formation of branched actin networks in the cytoplasm, providing the force for cell motility (PubMed:9230079). Seems to contact the mother actin filament (PubMed:9230079). In addition to its role in the cytoplasmic cytoskeleton, the Arp2/3 complex also promotes actin polymerization in the nucleus, thereby regulating gene transcription and repair of damaged DNA (PubMed:29925947). The Arp2/3 complex promotes homologous recombination (HR) repair in response to DNA damage by promoting nuclear actin polymerization, leading to drive motility of double-strand breaks (DSBs) (PubMed:29925947).</text>
</comment>
<comment type="subunit">
    <text evidence="1 2 4 5">Component of the Arp2/3 complex composed of ACTR2/ARP2, ACTR3/ARP3, ARPC1B/p41-ARC, ARPC2/p34-ARC, ARPC3/p21-ARC, ARPC4/p20-ARC and ARPC5/p16-ARC (PubMed:11741539, PubMed:9230079). Interacts with SHANK3; the interaction probably mediates the association of SHANK3 with the Arp2/3 complex (By similarity). Interacts with DNAI3; this interaction reduces binding of the Arp2/3 complex to the VCA domain of nucleation promoting factors (PubMed:32128961).</text>
</comment>
<comment type="interaction">
    <interactant intactId="EBI-352356">
        <id>O15144</id>
    </interactant>
    <interactant intactId="EBI-16079078">
        <id>Q7Z6K5-1</id>
        <label>ARPIN</label>
    </interactant>
    <organismsDiffer>false</organismsDiffer>
    <experiments>2</experiments>
</comment>
<comment type="interaction">
    <interactant intactId="EBI-352356">
        <id>O15144</id>
    </interactant>
    <interactant intactId="EBI-351152">
        <id>Q9BR76</id>
        <label>CORO1B</label>
    </interactant>
    <organismsDiffer>false</organismsDiffer>
    <experiments>2</experiments>
</comment>
<comment type="interaction">
    <interactant intactId="EBI-352356">
        <id>O15144</id>
    </interactant>
    <interactant intactId="EBI-2007911">
        <id>Q16236</id>
        <label>NFE2L2</label>
    </interactant>
    <organismsDiffer>false</organismsDiffer>
    <experiments>5</experiments>
</comment>
<comment type="interaction">
    <interactant intactId="EBI-352356">
        <id>O15144</id>
    </interactant>
    <interactant intactId="EBI-716775">
        <id>P18206</id>
        <label>VCL</label>
    </interactant>
    <organismsDiffer>false</organismsDiffer>
    <experiments>2</experiments>
</comment>
<comment type="subcellular location">
    <subcellularLocation>
        <location evidence="5">Cytoplasm</location>
        <location evidence="5">Cytoskeleton</location>
    </subcellularLocation>
    <subcellularLocation>
        <location evidence="5">Cell projection</location>
    </subcellularLocation>
    <subcellularLocation>
        <location evidence="1">Synapse</location>
        <location evidence="1">Synaptosome</location>
    </subcellularLocation>
    <subcellularLocation>
        <location evidence="3">Nucleus</location>
    </subcellularLocation>
</comment>
<comment type="similarity">
    <text evidence="6">Belongs to the ARPC2 family.</text>
</comment>
<comment type="sequence caution" evidence="6">
    <conflict type="frameshift">
        <sequence resource="EMBL-CDS" id="AAC50874"/>
    </conflict>
</comment>
<comment type="sequence caution" evidence="6">
    <conflict type="erroneous initiation">
        <sequence resource="EMBL-CDS" id="AAF71122"/>
    </conflict>
    <text>Truncated N-terminus.</text>
</comment>
<accession>O15144</accession>
<accession>Q92801</accession>
<accession>Q9P1D4</accession>
<organism>
    <name type="scientific">Homo sapiens</name>
    <name type="common">Human</name>
    <dbReference type="NCBI Taxonomy" id="9606"/>
    <lineage>
        <taxon>Eukaryota</taxon>
        <taxon>Metazoa</taxon>
        <taxon>Chordata</taxon>
        <taxon>Craniata</taxon>
        <taxon>Vertebrata</taxon>
        <taxon>Euteleostomi</taxon>
        <taxon>Mammalia</taxon>
        <taxon>Eutheria</taxon>
        <taxon>Euarchontoglires</taxon>
        <taxon>Primates</taxon>
        <taxon>Haplorrhini</taxon>
        <taxon>Catarrhini</taxon>
        <taxon>Hominidae</taxon>
        <taxon>Homo</taxon>
    </lineage>
</organism>
<dbReference type="EMBL" id="AF006085">
    <property type="protein sequence ID" value="AAB64190.1"/>
    <property type="molecule type" value="mRNA"/>
</dbReference>
<dbReference type="EMBL" id="U50523">
    <property type="protein sequence ID" value="AAC50874.1"/>
    <property type="status" value="ALT_FRAME"/>
    <property type="molecule type" value="mRNA"/>
</dbReference>
<dbReference type="EMBL" id="BT006898">
    <property type="protein sequence ID" value="AAP35544.1"/>
    <property type="molecule type" value="mRNA"/>
</dbReference>
<dbReference type="EMBL" id="BC000590">
    <property type="protein sequence ID" value="AAH00590.1"/>
    <property type="molecule type" value="mRNA"/>
</dbReference>
<dbReference type="EMBL" id="AF116702">
    <property type="protein sequence ID" value="AAF71122.1"/>
    <property type="status" value="ALT_INIT"/>
    <property type="molecule type" value="mRNA"/>
</dbReference>
<dbReference type="CCDS" id="CCDS2410.1"/>
<dbReference type="RefSeq" id="NP_005722.1">
    <property type="nucleotide sequence ID" value="NM_005731.3"/>
</dbReference>
<dbReference type="RefSeq" id="NP_690601.1">
    <property type="nucleotide sequence ID" value="NM_152862.3"/>
</dbReference>
<dbReference type="PDB" id="6UHC">
    <property type="method" value="EM"/>
    <property type="resolution" value="3.90 A"/>
    <property type="chains" value="D=1-300"/>
</dbReference>
<dbReference type="PDB" id="6YW6">
    <property type="method" value="EM"/>
    <property type="resolution" value="4.20 A"/>
    <property type="chains" value="D=1-300"/>
</dbReference>
<dbReference type="PDB" id="6YW7">
    <property type="method" value="EM"/>
    <property type="resolution" value="4.50 A"/>
    <property type="chains" value="D=1-300"/>
</dbReference>
<dbReference type="PDB" id="8P94">
    <property type="method" value="EM"/>
    <property type="resolution" value="3.30 A"/>
    <property type="chains" value="D=1-300"/>
</dbReference>
<dbReference type="PDBsum" id="6UHC"/>
<dbReference type="PDBsum" id="6YW6"/>
<dbReference type="PDBsum" id="6YW7"/>
<dbReference type="PDBsum" id="8P94"/>
<dbReference type="EMDB" id="EMD-10959"/>
<dbReference type="EMDB" id="EMD-10960"/>
<dbReference type="EMDB" id="EMD-17558"/>
<dbReference type="EMDB" id="EMD-20770"/>
<dbReference type="SMR" id="O15144"/>
<dbReference type="BioGRID" id="115415">
    <property type="interactions" value="206"/>
</dbReference>
<dbReference type="ComplexPortal" id="CPX-2490">
    <property type="entry name" value="Actin-related protein 2/3 complex, ARPC1A-ACTR3B-ARPC5 variant"/>
</dbReference>
<dbReference type="ComplexPortal" id="CPX-2579">
    <property type="entry name" value="Actin-related protein 2/3 complex, ARPC1B-ACTR3-ARPC5 variant"/>
</dbReference>
<dbReference type="ComplexPortal" id="CPX-2580">
    <property type="entry name" value="Actin-related protein 2/3 complex, ARPC1B-ACTR3B-ARPC5L variant"/>
</dbReference>
<dbReference type="ComplexPortal" id="CPX-2583">
    <property type="entry name" value="Actin-related protein 2/3 complex, ARPC1B-ACTR3B-ARPC5 variant"/>
</dbReference>
<dbReference type="ComplexPortal" id="CPX-2586">
    <property type="entry name" value="Actin-related protein 2/3 complex, ARPC1A-ACTR3-ARPC5 variant"/>
</dbReference>
<dbReference type="ComplexPortal" id="CPX-2592">
    <property type="entry name" value="Actin-related protein 2/3 complex, ARPC1A-ACTR3-ARPC5L variant"/>
</dbReference>
<dbReference type="ComplexPortal" id="CPX-2663">
    <property type="entry name" value="Actin-related protein 2/3 complex, ARPC1B-ACTR3-ARPC5L variant"/>
</dbReference>
<dbReference type="ComplexPortal" id="CPX-2668">
    <property type="entry name" value="Actin-related protein 2/3 complex, ARPC1B-ACTR3B-ARPC5L variant"/>
</dbReference>
<dbReference type="CORUM" id="O15144"/>
<dbReference type="DIP" id="DIP-33197N"/>
<dbReference type="FunCoup" id="O15144">
    <property type="interactions" value="2937"/>
</dbReference>
<dbReference type="IntAct" id="O15144">
    <property type="interactions" value="99"/>
</dbReference>
<dbReference type="MINT" id="O15144"/>
<dbReference type="STRING" id="9606.ENSP00000295685"/>
<dbReference type="ChEMBL" id="CHEMBL4295657"/>
<dbReference type="DrugBank" id="DB08236">
    <property type="generic name" value="(2S)-2-(3-bromophenyl)-3-(5-chloro-2-hydroxyphenyl)-1,3-thiazolidin-4-one"/>
</dbReference>
<dbReference type="DrugBank" id="DB08235">
    <property type="generic name" value="N-[2-(2-methyl-1H-indol-3-yl)ethyl]thiophene-2-carboxamide"/>
</dbReference>
<dbReference type="GlyGen" id="O15144">
    <property type="glycosylation" value="1 site, 1 O-linked glycan (1 site)"/>
</dbReference>
<dbReference type="iPTMnet" id="O15144"/>
<dbReference type="MetOSite" id="O15144"/>
<dbReference type="PhosphoSitePlus" id="O15144"/>
<dbReference type="SwissPalm" id="O15144"/>
<dbReference type="BioMuta" id="ARPC2"/>
<dbReference type="OGP" id="O15144"/>
<dbReference type="CPTAC" id="CPTAC-1597"/>
<dbReference type="CPTAC" id="CPTAC-167"/>
<dbReference type="CPTAC" id="CPTAC-168"/>
<dbReference type="jPOST" id="O15144"/>
<dbReference type="MassIVE" id="O15144"/>
<dbReference type="PaxDb" id="9606-ENSP00000295685"/>
<dbReference type="PeptideAtlas" id="O15144"/>
<dbReference type="ProteomicsDB" id="48469"/>
<dbReference type="Pumba" id="O15144"/>
<dbReference type="TopDownProteomics" id="O15144"/>
<dbReference type="Antibodypedia" id="1901">
    <property type="antibodies" value="368 antibodies from 37 providers"/>
</dbReference>
<dbReference type="DNASU" id="10109"/>
<dbReference type="Ensembl" id="ENST00000295685.14">
    <property type="protein sequence ID" value="ENSP00000295685.10"/>
    <property type="gene ID" value="ENSG00000163466.16"/>
</dbReference>
<dbReference type="Ensembl" id="ENST00000315717.10">
    <property type="protein sequence ID" value="ENSP00000327137.5"/>
    <property type="gene ID" value="ENSG00000163466.16"/>
</dbReference>
<dbReference type="GeneID" id="10109"/>
<dbReference type="KEGG" id="hsa:10109"/>
<dbReference type="MANE-Select" id="ENST00000315717.10">
    <property type="protein sequence ID" value="ENSP00000327137.5"/>
    <property type="RefSeq nucleotide sequence ID" value="NM_152862.3"/>
    <property type="RefSeq protein sequence ID" value="NP_690601.1"/>
</dbReference>
<dbReference type="AGR" id="HGNC:705"/>
<dbReference type="CTD" id="10109"/>
<dbReference type="DisGeNET" id="10109"/>
<dbReference type="GeneCards" id="ARPC2"/>
<dbReference type="HGNC" id="HGNC:705">
    <property type="gene designation" value="ARPC2"/>
</dbReference>
<dbReference type="HPA" id="ENSG00000163466">
    <property type="expression patterns" value="Low tissue specificity"/>
</dbReference>
<dbReference type="MIM" id="604224">
    <property type="type" value="gene"/>
</dbReference>
<dbReference type="neXtProt" id="NX_O15144"/>
<dbReference type="OpenTargets" id="ENSG00000163466"/>
<dbReference type="PharmGKB" id="PA24999"/>
<dbReference type="VEuPathDB" id="HostDB:ENSG00000163466"/>
<dbReference type="eggNOG" id="KOG2826">
    <property type="taxonomic scope" value="Eukaryota"/>
</dbReference>
<dbReference type="GeneTree" id="ENSGT00390000016794"/>
<dbReference type="HOGENOM" id="CLU_059439_2_0_1"/>
<dbReference type="InParanoid" id="O15144"/>
<dbReference type="OMA" id="FRSYFHY"/>
<dbReference type="OrthoDB" id="148331at2759"/>
<dbReference type="PAN-GO" id="O15144">
    <property type="GO annotations" value="3 GO annotations based on evolutionary models"/>
</dbReference>
<dbReference type="PhylomeDB" id="O15144"/>
<dbReference type="TreeFam" id="TF315006"/>
<dbReference type="PathwayCommons" id="O15144"/>
<dbReference type="Reactome" id="R-HSA-2029482">
    <property type="pathway name" value="Regulation of actin dynamics for phagocytic cup formation"/>
</dbReference>
<dbReference type="Reactome" id="R-HSA-3928662">
    <property type="pathway name" value="EPHB-mediated forward signaling"/>
</dbReference>
<dbReference type="Reactome" id="R-HSA-5663213">
    <property type="pathway name" value="RHO GTPases Activate WASPs and WAVEs"/>
</dbReference>
<dbReference type="Reactome" id="R-HSA-8856828">
    <property type="pathway name" value="Clathrin-mediated endocytosis"/>
</dbReference>
<dbReference type="Reactome" id="R-HSA-9664422">
    <property type="pathway name" value="FCGR3A-mediated phagocytosis"/>
</dbReference>
<dbReference type="SignaLink" id="O15144"/>
<dbReference type="SIGNOR" id="O15144"/>
<dbReference type="BioGRID-ORCS" id="10109">
    <property type="hits" value="361 hits in 1169 CRISPR screens"/>
</dbReference>
<dbReference type="CD-CODE" id="91857CE7">
    <property type="entry name" value="Nucleolus"/>
</dbReference>
<dbReference type="CD-CODE" id="FB4E32DD">
    <property type="entry name" value="Presynaptic clusters and postsynaptic densities"/>
</dbReference>
<dbReference type="ChiTaRS" id="ARPC2">
    <property type="organism name" value="human"/>
</dbReference>
<dbReference type="GeneWiki" id="ARPC2"/>
<dbReference type="GenomeRNAi" id="10109"/>
<dbReference type="Pharos" id="O15144">
    <property type="development level" value="Tbio"/>
</dbReference>
<dbReference type="PRO" id="PR:O15144"/>
<dbReference type="Proteomes" id="UP000005640">
    <property type="component" value="Chromosome 2"/>
</dbReference>
<dbReference type="RNAct" id="O15144">
    <property type="molecule type" value="protein"/>
</dbReference>
<dbReference type="Bgee" id="ENSG00000163466">
    <property type="expression patterns" value="Expressed in esophagus squamous epithelium and 208 other cell types or tissues"/>
</dbReference>
<dbReference type="ExpressionAtlas" id="O15144">
    <property type="expression patterns" value="baseline and differential"/>
</dbReference>
<dbReference type="GO" id="GO:0015629">
    <property type="term" value="C:actin cytoskeleton"/>
    <property type="evidence" value="ECO:0000304"/>
    <property type="project" value="ProtInc"/>
</dbReference>
<dbReference type="GO" id="GO:0005885">
    <property type="term" value="C:Arp2/3 protein complex"/>
    <property type="evidence" value="ECO:0000314"/>
    <property type="project" value="FlyBase"/>
</dbReference>
<dbReference type="GO" id="GO:0005829">
    <property type="term" value="C:cytosol"/>
    <property type="evidence" value="ECO:0000304"/>
    <property type="project" value="Reactome"/>
</dbReference>
<dbReference type="GO" id="GO:0005768">
    <property type="term" value="C:endosome"/>
    <property type="evidence" value="ECO:0007669"/>
    <property type="project" value="Ensembl"/>
</dbReference>
<dbReference type="GO" id="GO:0070062">
    <property type="term" value="C:extracellular exosome"/>
    <property type="evidence" value="ECO:0007005"/>
    <property type="project" value="UniProtKB"/>
</dbReference>
<dbReference type="GO" id="GO:0005925">
    <property type="term" value="C:focal adhesion"/>
    <property type="evidence" value="ECO:0007005"/>
    <property type="project" value="UniProtKB"/>
</dbReference>
<dbReference type="GO" id="GO:0098978">
    <property type="term" value="C:glutamatergic synapse"/>
    <property type="evidence" value="ECO:0007669"/>
    <property type="project" value="Ensembl"/>
</dbReference>
<dbReference type="GO" id="GO:0030027">
    <property type="term" value="C:lamellipodium"/>
    <property type="evidence" value="ECO:0000314"/>
    <property type="project" value="UniProtKB"/>
</dbReference>
<dbReference type="GO" id="GO:0036195">
    <property type="term" value="C:muscle cell projection membrane"/>
    <property type="evidence" value="ECO:0007669"/>
    <property type="project" value="Ensembl"/>
</dbReference>
<dbReference type="GO" id="GO:0043005">
    <property type="term" value="C:neuron projection"/>
    <property type="evidence" value="ECO:0007669"/>
    <property type="project" value="UniProtKB-KW"/>
</dbReference>
<dbReference type="GO" id="GO:0005654">
    <property type="term" value="C:nucleoplasm"/>
    <property type="evidence" value="ECO:0000314"/>
    <property type="project" value="HPA"/>
</dbReference>
<dbReference type="GO" id="GO:0005634">
    <property type="term" value="C:nucleus"/>
    <property type="evidence" value="ECO:0000250"/>
    <property type="project" value="UniProtKB"/>
</dbReference>
<dbReference type="GO" id="GO:0098794">
    <property type="term" value="C:postsynapse"/>
    <property type="evidence" value="ECO:0007669"/>
    <property type="project" value="Ensembl"/>
</dbReference>
<dbReference type="GO" id="GO:0035861">
    <property type="term" value="C:site of double-strand break"/>
    <property type="evidence" value="ECO:0000250"/>
    <property type="project" value="UniProtKB"/>
</dbReference>
<dbReference type="GO" id="GO:0030672">
    <property type="term" value="C:synaptic vesicle membrane"/>
    <property type="evidence" value="ECO:0007669"/>
    <property type="project" value="Ensembl"/>
</dbReference>
<dbReference type="GO" id="GO:0003779">
    <property type="term" value="F:actin binding"/>
    <property type="evidence" value="ECO:0007669"/>
    <property type="project" value="UniProtKB-KW"/>
</dbReference>
<dbReference type="GO" id="GO:0005200">
    <property type="term" value="F:structural constituent of cytoskeleton"/>
    <property type="evidence" value="ECO:0000314"/>
    <property type="project" value="FlyBase"/>
</dbReference>
<dbReference type="GO" id="GO:0030041">
    <property type="term" value="P:actin filament polymerization"/>
    <property type="evidence" value="ECO:0007669"/>
    <property type="project" value="InterPro"/>
</dbReference>
<dbReference type="GO" id="GO:0070358">
    <property type="term" value="P:actin polymerization-dependent cell motility"/>
    <property type="evidence" value="ECO:0000304"/>
    <property type="project" value="UniProtKB"/>
</dbReference>
<dbReference type="GO" id="GO:0034314">
    <property type="term" value="P:Arp2/3 complex-mediated actin nucleation"/>
    <property type="evidence" value="ECO:0000314"/>
    <property type="project" value="FlyBase"/>
</dbReference>
<dbReference type="GO" id="GO:0030838">
    <property type="term" value="P:positive regulation of actin filament polymerization"/>
    <property type="evidence" value="ECO:0007669"/>
    <property type="project" value="Ensembl"/>
</dbReference>
<dbReference type="GO" id="GO:0010592">
    <property type="term" value="P:positive regulation of lamellipodium assembly"/>
    <property type="evidence" value="ECO:0000315"/>
    <property type="project" value="UniProtKB"/>
</dbReference>
<dbReference type="GO" id="GO:1900026">
    <property type="term" value="P:positive regulation of substrate adhesion-dependent cell spreading"/>
    <property type="evidence" value="ECO:0007669"/>
    <property type="project" value="Ensembl"/>
</dbReference>
<dbReference type="FunFam" id="3.30.1460.20:FF:000002">
    <property type="entry name" value="Arp2/3 complex 34 kDa subunit"/>
    <property type="match status" value="1"/>
</dbReference>
<dbReference type="FunFam" id="3.30.1460.20:FF:000004">
    <property type="entry name" value="Arp2/3 complex 34 kDa subunit"/>
    <property type="match status" value="1"/>
</dbReference>
<dbReference type="Gene3D" id="3.30.1460.20">
    <property type="match status" value="2"/>
</dbReference>
<dbReference type="InterPro" id="IPR007188">
    <property type="entry name" value="ARPC2"/>
</dbReference>
<dbReference type="InterPro" id="IPR034666">
    <property type="entry name" value="ARPC2/4"/>
</dbReference>
<dbReference type="PANTHER" id="PTHR12058:SF0">
    <property type="entry name" value="ACTIN-RELATED PROTEIN 2_3 COMPLEX SUBUNIT 2"/>
    <property type="match status" value="1"/>
</dbReference>
<dbReference type="PANTHER" id="PTHR12058">
    <property type="entry name" value="ARP2/3 COMPLEX 34 KDA SUBUNIT"/>
    <property type="match status" value="1"/>
</dbReference>
<dbReference type="Pfam" id="PF04045">
    <property type="entry name" value="P34-Arc"/>
    <property type="match status" value="1"/>
</dbReference>
<dbReference type="SUPFAM" id="SSF69645">
    <property type="entry name" value="Arp2/3 complex subunits"/>
    <property type="match status" value="2"/>
</dbReference>
<reference key="1">
    <citation type="journal article" date="1997" name="J. Cell Biol.">
        <title>The human Arp2/3 complex is composed of evolutionarily conserved subunits and is localized to cellular regions of dynamic actin filament assembly.</title>
        <authorList>
            <person name="Welch M.D."/>
            <person name="Depace A.H."/>
            <person name="Verma S."/>
            <person name="Iwamatsu A."/>
            <person name="Mitchison T.J."/>
        </authorList>
    </citation>
    <scope>NUCLEOTIDE SEQUENCE [MRNA]</scope>
    <scope>IDENTIFICATION IN THE ARP2/2 COMPLEX</scope>
    <scope>SUBCELLULAR LOCATION</scope>
</reference>
<reference key="2">
    <citation type="journal article" date="1996" name="Genomics">
        <title>Generation of an integrated transcription map of the BRCA2 region on chromosome 13q12-q13.</title>
        <authorList>
            <person name="Couch F.J."/>
            <person name="Rommens J.M."/>
            <person name="Neuhausen S.L."/>
            <person name="Belanger C."/>
            <person name="Dumont M."/>
            <person name="Kenneth A."/>
            <person name="Bell R."/>
            <person name="Berry S."/>
            <person name="Bogden R."/>
            <person name="Cannon-Albright L."/>
            <person name="Farid L."/>
            <person name="Frye C."/>
            <person name="Hattier T."/>
            <person name="Janecki T."/>
            <person name="Jiang P."/>
            <person name="Kehrer R."/>
            <person name="Leblanc J.F."/>
            <person name="McArthur-Morrison J."/>
            <person name="McSweeney D."/>
            <person name="Miki Y."/>
            <person name="Peng Y."/>
            <person name="Samson C."/>
            <person name="Schroeder M."/>
            <person name="Snyder S.C."/>
            <person name="Stringfellow M."/>
            <person name="Stroup C."/>
            <person name="Swedlund B."/>
            <person name="Swensen J."/>
            <person name="Teng D."/>
            <person name="Thakur S."/>
            <person name="Tran T."/>
            <person name="Tranchant M."/>
            <person name="Welver-Feldhaus J."/>
            <person name="Wong A.K.C."/>
            <person name="Shizuya H."/>
            <person name="Labrie F."/>
            <person name="Skolnick M.H."/>
            <person name="Goldgar D.E."/>
            <person name="Kamb A."/>
            <person name="Weber B.L."/>
            <person name="Tavtigian S.V."/>
            <person name="Simard J."/>
        </authorList>
    </citation>
    <scope>NUCLEOTIDE SEQUENCE [MRNA]</scope>
</reference>
<reference key="3">
    <citation type="submission" date="2003-05" db="EMBL/GenBank/DDBJ databases">
        <title>Cloning of human full-length CDSs in BD Creator(TM) system donor vector.</title>
        <authorList>
            <person name="Kalnine N."/>
            <person name="Chen X."/>
            <person name="Rolfs A."/>
            <person name="Halleck A."/>
            <person name="Hines L."/>
            <person name="Eisenstein S."/>
            <person name="Koundinya M."/>
            <person name="Raphael J."/>
            <person name="Moreira D."/>
            <person name="Kelley T."/>
            <person name="LaBaer J."/>
            <person name="Lin Y."/>
            <person name="Phelan M."/>
            <person name="Farmer A."/>
        </authorList>
    </citation>
    <scope>NUCLEOTIDE SEQUENCE [LARGE SCALE MRNA]</scope>
</reference>
<reference key="4">
    <citation type="journal article" date="2004" name="Genome Res.">
        <title>The status, quality, and expansion of the NIH full-length cDNA project: the Mammalian Gene Collection (MGC).</title>
        <authorList>
            <consortium name="The MGC Project Team"/>
        </authorList>
    </citation>
    <scope>NUCLEOTIDE SEQUENCE [LARGE SCALE MRNA]</scope>
    <source>
        <tissue>Skin</tissue>
    </source>
</reference>
<reference key="5">
    <citation type="journal article" date="2003" name="Nat. Biotechnol.">
        <title>Exploring proteomes and analyzing protein processing by mass spectrometric identification of sorted N-terminal peptides.</title>
        <authorList>
            <person name="Gevaert K."/>
            <person name="Goethals M."/>
            <person name="Martens L."/>
            <person name="Van Damme J."/>
            <person name="Staes A."/>
            <person name="Thomas G.R."/>
            <person name="Vandekerckhove J."/>
        </authorList>
    </citation>
    <scope>PROTEIN SEQUENCE OF 1-9</scope>
    <source>
        <tissue>Platelet</tissue>
    </source>
</reference>
<reference key="6">
    <citation type="submission" date="1998-12" db="EMBL/GenBank/DDBJ databases">
        <title>Functional prediction of the coding sequences of 121 new genes deduced by analysis of cDNA clones from human fetal liver.</title>
        <authorList>
            <person name="Zhang C."/>
            <person name="Yu Y."/>
            <person name="Zhang S."/>
            <person name="Wei H."/>
            <person name="Zhou G."/>
            <person name="Ouyang S."/>
            <person name="Luo L."/>
            <person name="Bi J."/>
            <person name="Liu M."/>
            <person name="He F."/>
        </authorList>
    </citation>
    <scope>NUCLEOTIDE SEQUENCE [LARGE SCALE MRNA] OF 25-290</scope>
    <source>
        <tissue>Fetal liver</tissue>
    </source>
</reference>
<reference key="7">
    <citation type="submission" date="2007-03" db="UniProtKB">
        <authorList>
            <person name="Lubec G."/>
            <person name="Afjehi-Sadat L."/>
        </authorList>
    </citation>
    <scope>PROTEIN SEQUENCE OF 191-203</scope>
    <scope>IDENTIFICATION BY MASS SPECTROMETRY</scope>
    <source>
        <tissue>Brain</tissue>
        <tissue>Cajal-Retzius cell</tissue>
    </source>
</reference>
<reference key="8">
    <citation type="journal article" date="2001" name="Mol. Cell">
        <title>Reconstitution of human Arp2/3 complex reveals critical roles of individual subunits in complex structure and activity.</title>
        <authorList>
            <person name="Gournier H."/>
            <person name="Goley E.D."/>
            <person name="Niederstrasser H."/>
            <person name="Trinh T."/>
            <person name="Welch M.D."/>
        </authorList>
    </citation>
    <scope>ACTIN-BINDING</scope>
    <scope>RECONSTITUTION OF THE ARP2/3 COMPLEX</scope>
</reference>
<reference key="9">
    <citation type="journal article" date="2009" name="Science">
        <title>Lysine acetylation targets protein complexes and co-regulates major cellular functions.</title>
        <authorList>
            <person name="Choudhary C."/>
            <person name="Kumar C."/>
            <person name="Gnad F."/>
            <person name="Nielsen M.L."/>
            <person name="Rehman M."/>
            <person name="Walther T.C."/>
            <person name="Olsen J.V."/>
            <person name="Mann M."/>
        </authorList>
    </citation>
    <scope>ACETYLATION [LARGE SCALE ANALYSIS] AT LYS-275 AND LYS-295</scope>
    <scope>IDENTIFICATION BY MASS SPECTROMETRY [LARGE SCALE ANALYSIS]</scope>
</reference>
<reference key="10">
    <citation type="journal article" date="2011" name="BMC Syst. Biol.">
        <title>Initial characterization of the human central proteome.</title>
        <authorList>
            <person name="Burkard T.R."/>
            <person name="Planyavsky M."/>
            <person name="Kaupe I."/>
            <person name="Breitwieser F.P."/>
            <person name="Buerckstuemmer T."/>
            <person name="Bennett K.L."/>
            <person name="Superti-Furga G."/>
            <person name="Colinge J."/>
        </authorList>
    </citation>
    <scope>IDENTIFICATION BY MASS SPECTROMETRY [LARGE SCALE ANALYSIS]</scope>
</reference>
<reference key="11">
    <citation type="journal article" date="2012" name="Proc. Natl. Acad. Sci. U.S.A.">
        <title>N-terminal acetylome analyses and functional insights of the N-terminal acetyltransferase NatB.</title>
        <authorList>
            <person name="Van Damme P."/>
            <person name="Lasa M."/>
            <person name="Polevoda B."/>
            <person name="Gazquez C."/>
            <person name="Elosegui-Artola A."/>
            <person name="Kim D.S."/>
            <person name="De Juan-Pardo E."/>
            <person name="Demeyer K."/>
            <person name="Hole K."/>
            <person name="Larrea E."/>
            <person name="Timmerman E."/>
            <person name="Prieto J."/>
            <person name="Arnesen T."/>
            <person name="Sherman F."/>
            <person name="Gevaert K."/>
            <person name="Aldabe R."/>
        </authorList>
    </citation>
    <scope>IDENTIFICATION BY MASS SPECTROMETRY [LARGE SCALE ANALYSIS]</scope>
</reference>
<reference key="12">
    <citation type="journal article" date="2014" name="J. Proteomics">
        <title>An enzyme assisted RP-RPLC approach for in-depth analysis of human liver phosphoproteome.</title>
        <authorList>
            <person name="Bian Y."/>
            <person name="Song C."/>
            <person name="Cheng K."/>
            <person name="Dong M."/>
            <person name="Wang F."/>
            <person name="Huang J."/>
            <person name="Sun D."/>
            <person name="Wang L."/>
            <person name="Ye M."/>
            <person name="Zou H."/>
        </authorList>
    </citation>
    <scope>IDENTIFICATION BY MASS SPECTROMETRY [LARGE SCALE ANALYSIS]</scope>
    <source>
        <tissue>Liver</tissue>
    </source>
</reference>
<reference key="13">
    <citation type="journal article" date="2015" name="Proteomics">
        <title>N-terminome analysis of the human mitochondrial proteome.</title>
        <authorList>
            <person name="Vaca Jacome A.S."/>
            <person name="Rabilloud T."/>
            <person name="Schaeffer-Reiss C."/>
            <person name="Rompais M."/>
            <person name="Ayoub D."/>
            <person name="Lane L."/>
            <person name="Bairoch A."/>
            <person name="Van Dorsselaer A."/>
            <person name="Carapito C."/>
        </authorList>
    </citation>
    <scope>IDENTIFICATION BY MASS SPECTROMETRY [LARGE SCALE ANALYSIS]</scope>
</reference>
<reference key="14">
    <citation type="journal article" date="2018" name="Nature">
        <title>Nuclear ARP2/3 drives DNA break clustering for homology-directed repair.</title>
        <authorList>
            <person name="Schrank B.R."/>
            <person name="Aparicio T."/>
            <person name="Li Y."/>
            <person name="Chang W."/>
            <person name="Chait B.T."/>
            <person name="Gundersen G.G."/>
            <person name="Gottesman M.E."/>
            <person name="Gautier J."/>
        </authorList>
    </citation>
    <scope>FUNCTION</scope>
    <scope>SUBCELLULAR LOCATION</scope>
</reference>
<reference key="15">
    <citation type="journal article" date="2020" name="EMBO Rep.">
        <title>WDR63 inhibits Arp2/3-dependent actin polymerization and mediates the function of p53 in suppressing metastasis.</title>
        <authorList>
            <person name="Zhao K."/>
            <person name="Wang D."/>
            <person name="Zhao X."/>
            <person name="Wang C."/>
            <person name="Gao Y."/>
            <person name="Liu K."/>
            <person name="Wang F."/>
            <person name="Wu X."/>
            <person name="Wang X."/>
            <person name="Sun L."/>
            <person name="Zang J."/>
            <person name="Mei Y."/>
        </authorList>
    </citation>
    <scope>INTERACTION WITH DNAI3</scope>
</reference>
<gene>
    <name type="primary">ARPC2</name>
    <name type="synonym">ARC34</name>
    <name type="ORF">PRO2446</name>
</gene>
<feature type="chain" id="PRO_0000124033" description="Actin-related protein 2/3 complex subunit 2">
    <location>
        <begin position="1"/>
        <end position="300"/>
    </location>
</feature>
<feature type="modified residue" description="N6-acetyllysine" evidence="7">
    <location>
        <position position="275"/>
    </location>
</feature>
<feature type="modified residue" description="N6-acetyllysine" evidence="7">
    <location>
        <position position="295"/>
    </location>
</feature>
<feature type="sequence conflict" description="In Ref. 2; AAC50874." evidence="6" ref="2">
    <original>A</original>
    <variation>C</variation>
    <location>
        <position position="72"/>
    </location>
</feature>
<feature type="sequence conflict" description="In Ref. 6; AAF71122." evidence="6" ref="6">
    <original>MKTITGKTFSSR</original>
    <variation>KI</variation>
    <location>
        <begin position="289"/>
        <end position="300"/>
    </location>
</feature>
<protein>
    <recommendedName>
        <fullName>Actin-related protein 2/3 complex subunit 2</fullName>
    </recommendedName>
    <alternativeName>
        <fullName>Arp2/3 complex 34 kDa subunit</fullName>
        <shortName>p34-ARC</shortName>
    </alternativeName>
</protein>
<keyword id="KW-0002">3D-structure</keyword>
<keyword id="KW-0007">Acetylation</keyword>
<keyword id="KW-0009">Actin-binding</keyword>
<keyword id="KW-0966">Cell projection</keyword>
<keyword id="KW-0963">Cytoplasm</keyword>
<keyword id="KW-0206">Cytoskeleton</keyword>
<keyword id="KW-0903">Direct protein sequencing</keyword>
<keyword id="KW-0539">Nucleus</keyword>
<keyword id="KW-1267">Proteomics identification</keyword>
<keyword id="KW-1185">Reference proteome</keyword>
<keyword id="KW-0770">Synapse</keyword>
<keyword id="KW-0771">Synaptosome</keyword>
<sequence>MILLEVNNRIIEETLALKFENAAAGNKPEAVEVTFADFDGVLYHISNPNGDKTKVMVSISLKFYKELQAHGADELLKRVYGSFLVNPESGYNVSLLYDLENLPASKDSIVHQAGMLKRNCFASVFEKYFQFQEEGKEGENRAVIHYRDDETMYVESKKDRVTVVFSTVFKDDDDVVIGKVFMQEFKEGRRASHTAPQVLFSHREPPLELKDTDAAVGDNIGYITFVLFPRHTNASARDNTINLIHTFRDYLHYHIKCSKAYIHTRMRAKTSDFLKVLNRARPDAEKKEMKTITGKTFSSR</sequence>
<proteinExistence type="evidence at protein level"/>